<name>NADK_SHEB9</name>
<sequence>MGINFDVSRPKARSSINMITKFHTIGLIGKPHHQGTNQTLKRLHHWLTMQGFEVLVEERVAAELGPNIEAVDLLEIGARCDLAIVVGGDGNMLGAARVLARFDLGVIGVNRGNLGFLTDLPPDAFEEALAKVLDGEFDTEHRFLLEAEVYRHGMLKASNTAVNEAVLHPGKIAHMIEFEVYIDDQFMYSQRADGMIVSTPTGSTAYALSAGGAILTPNLQALILVPMFPHTLSCRPIVVDACSTIKMVVSPDNGENLEVSCDGHVHLAVLPGDEIIVRRSSERLRLIHPKGHNYFHVLRTKLGWGSKLF</sequence>
<proteinExistence type="inferred from homology"/>
<evidence type="ECO:0000255" key="1">
    <source>
        <dbReference type="HAMAP-Rule" id="MF_00361"/>
    </source>
</evidence>
<keyword id="KW-0067">ATP-binding</keyword>
<keyword id="KW-0963">Cytoplasm</keyword>
<keyword id="KW-0418">Kinase</keyword>
<keyword id="KW-0520">NAD</keyword>
<keyword id="KW-0521">NADP</keyword>
<keyword id="KW-0547">Nucleotide-binding</keyword>
<keyword id="KW-0808">Transferase</keyword>
<accession>A9KTL1</accession>
<reference key="1">
    <citation type="submission" date="2007-11" db="EMBL/GenBank/DDBJ databases">
        <title>Complete sequence of chromosome of Shewanella baltica OS195.</title>
        <authorList>
            <consortium name="US DOE Joint Genome Institute"/>
            <person name="Copeland A."/>
            <person name="Lucas S."/>
            <person name="Lapidus A."/>
            <person name="Barry K."/>
            <person name="Glavina del Rio T."/>
            <person name="Dalin E."/>
            <person name="Tice H."/>
            <person name="Pitluck S."/>
            <person name="Chain P."/>
            <person name="Malfatti S."/>
            <person name="Shin M."/>
            <person name="Vergez L."/>
            <person name="Schmutz J."/>
            <person name="Larimer F."/>
            <person name="Land M."/>
            <person name="Hauser L."/>
            <person name="Kyrpides N."/>
            <person name="Kim E."/>
            <person name="Brettar I."/>
            <person name="Rodrigues J."/>
            <person name="Konstantinidis K."/>
            <person name="Klappenbach J."/>
            <person name="Hofle M."/>
            <person name="Tiedje J."/>
            <person name="Richardson P."/>
        </authorList>
    </citation>
    <scope>NUCLEOTIDE SEQUENCE [LARGE SCALE GENOMIC DNA]</scope>
    <source>
        <strain>OS195</strain>
    </source>
</reference>
<dbReference type="EC" id="2.7.1.23" evidence="1"/>
<dbReference type="EMBL" id="CP000891">
    <property type="protein sequence ID" value="ABX48552.1"/>
    <property type="molecule type" value="Genomic_DNA"/>
</dbReference>
<dbReference type="SMR" id="A9KTL1"/>
<dbReference type="KEGG" id="sbn:Sbal195_1378"/>
<dbReference type="HOGENOM" id="CLU_008831_0_1_6"/>
<dbReference type="Proteomes" id="UP000000770">
    <property type="component" value="Chromosome"/>
</dbReference>
<dbReference type="GO" id="GO:0005737">
    <property type="term" value="C:cytoplasm"/>
    <property type="evidence" value="ECO:0007669"/>
    <property type="project" value="UniProtKB-SubCell"/>
</dbReference>
<dbReference type="GO" id="GO:0005524">
    <property type="term" value="F:ATP binding"/>
    <property type="evidence" value="ECO:0007669"/>
    <property type="project" value="UniProtKB-KW"/>
</dbReference>
<dbReference type="GO" id="GO:0046872">
    <property type="term" value="F:metal ion binding"/>
    <property type="evidence" value="ECO:0007669"/>
    <property type="project" value="UniProtKB-UniRule"/>
</dbReference>
<dbReference type="GO" id="GO:0051287">
    <property type="term" value="F:NAD binding"/>
    <property type="evidence" value="ECO:0007669"/>
    <property type="project" value="UniProtKB-ARBA"/>
</dbReference>
<dbReference type="GO" id="GO:0003951">
    <property type="term" value="F:NAD+ kinase activity"/>
    <property type="evidence" value="ECO:0007669"/>
    <property type="project" value="UniProtKB-UniRule"/>
</dbReference>
<dbReference type="GO" id="GO:0019674">
    <property type="term" value="P:NAD metabolic process"/>
    <property type="evidence" value="ECO:0007669"/>
    <property type="project" value="InterPro"/>
</dbReference>
<dbReference type="GO" id="GO:0006741">
    <property type="term" value="P:NADP biosynthetic process"/>
    <property type="evidence" value="ECO:0007669"/>
    <property type="project" value="UniProtKB-UniRule"/>
</dbReference>
<dbReference type="FunFam" id="2.60.200.30:FF:000001">
    <property type="entry name" value="NAD kinase"/>
    <property type="match status" value="1"/>
</dbReference>
<dbReference type="Gene3D" id="3.40.50.10330">
    <property type="entry name" value="Probable inorganic polyphosphate/atp-NAD kinase, domain 1"/>
    <property type="match status" value="1"/>
</dbReference>
<dbReference type="Gene3D" id="2.60.200.30">
    <property type="entry name" value="Probable inorganic polyphosphate/atp-NAD kinase, domain 2"/>
    <property type="match status" value="1"/>
</dbReference>
<dbReference type="HAMAP" id="MF_00361">
    <property type="entry name" value="NAD_kinase"/>
    <property type="match status" value="1"/>
</dbReference>
<dbReference type="InterPro" id="IPR017438">
    <property type="entry name" value="ATP-NAD_kinase_N"/>
</dbReference>
<dbReference type="InterPro" id="IPR017437">
    <property type="entry name" value="ATP-NAD_kinase_PpnK-typ_C"/>
</dbReference>
<dbReference type="InterPro" id="IPR016064">
    <property type="entry name" value="NAD/diacylglycerol_kinase_sf"/>
</dbReference>
<dbReference type="InterPro" id="IPR002504">
    <property type="entry name" value="NADK"/>
</dbReference>
<dbReference type="NCBIfam" id="NF002306">
    <property type="entry name" value="PRK01231.1"/>
    <property type="match status" value="1"/>
</dbReference>
<dbReference type="NCBIfam" id="NF002893">
    <property type="entry name" value="PRK03378.1"/>
    <property type="match status" value="1"/>
</dbReference>
<dbReference type="PANTHER" id="PTHR20275">
    <property type="entry name" value="NAD KINASE"/>
    <property type="match status" value="1"/>
</dbReference>
<dbReference type="PANTHER" id="PTHR20275:SF0">
    <property type="entry name" value="NAD KINASE"/>
    <property type="match status" value="1"/>
</dbReference>
<dbReference type="Pfam" id="PF01513">
    <property type="entry name" value="NAD_kinase"/>
    <property type="match status" value="1"/>
</dbReference>
<dbReference type="Pfam" id="PF20143">
    <property type="entry name" value="NAD_kinase_C"/>
    <property type="match status" value="1"/>
</dbReference>
<dbReference type="SUPFAM" id="SSF111331">
    <property type="entry name" value="NAD kinase/diacylglycerol kinase-like"/>
    <property type="match status" value="1"/>
</dbReference>
<comment type="function">
    <text evidence="1">Involved in the regulation of the intracellular balance of NAD and NADP, and is a key enzyme in the biosynthesis of NADP. Catalyzes specifically the phosphorylation on 2'-hydroxyl of the adenosine moiety of NAD to yield NADP.</text>
</comment>
<comment type="catalytic activity">
    <reaction evidence="1">
        <text>NAD(+) + ATP = ADP + NADP(+) + H(+)</text>
        <dbReference type="Rhea" id="RHEA:18629"/>
        <dbReference type="ChEBI" id="CHEBI:15378"/>
        <dbReference type="ChEBI" id="CHEBI:30616"/>
        <dbReference type="ChEBI" id="CHEBI:57540"/>
        <dbReference type="ChEBI" id="CHEBI:58349"/>
        <dbReference type="ChEBI" id="CHEBI:456216"/>
        <dbReference type="EC" id="2.7.1.23"/>
    </reaction>
</comment>
<comment type="cofactor">
    <cofactor evidence="1">
        <name>a divalent metal cation</name>
        <dbReference type="ChEBI" id="CHEBI:60240"/>
    </cofactor>
</comment>
<comment type="subcellular location">
    <subcellularLocation>
        <location evidence="1">Cytoplasm</location>
    </subcellularLocation>
</comment>
<comment type="similarity">
    <text evidence="1">Belongs to the NAD kinase family.</text>
</comment>
<protein>
    <recommendedName>
        <fullName evidence="1">NAD kinase</fullName>
        <ecNumber evidence="1">2.7.1.23</ecNumber>
    </recommendedName>
    <alternativeName>
        <fullName evidence="1">ATP-dependent NAD kinase</fullName>
    </alternativeName>
</protein>
<feature type="chain" id="PRO_1000079511" description="NAD kinase">
    <location>
        <begin position="1"/>
        <end position="309"/>
    </location>
</feature>
<feature type="active site" description="Proton acceptor" evidence="1">
    <location>
        <position position="89"/>
    </location>
</feature>
<feature type="binding site" evidence="1">
    <location>
        <begin position="89"/>
        <end position="90"/>
    </location>
    <ligand>
        <name>NAD(+)</name>
        <dbReference type="ChEBI" id="CHEBI:57540"/>
    </ligand>
</feature>
<feature type="binding site" evidence="1">
    <location>
        <begin position="163"/>
        <end position="164"/>
    </location>
    <ligand>
        <name>NAD(+)</name>
        <dbReference type="ChEBI" id="CHEBI:57540"/>
    </ligand>
</feature>
<feature type="binding site" evidence="1">
    <location>
        <position position="174"/>
    </location>
    <ligand>
        <name>NAD(+)</name>
        <dbReference type="ChEBI" id="CHEBI:57540"/>
    </ligand>
</feature>
<feature type="binding site" evidence="1">
    <location>
        <position position="191"/>
    </location>
    <ligand>
        <name>NAD(+)</name>
        <dbReference type="ChEBI" id="CHEBI:57540"/>
    </ligand>
</feature>
<feature type="binding site" evidence="1">
    <location>
        <position position="193"/>
    </location>
    <ligand>
        <name>NAD(+)</name>
        <dbReference type="ChEBI" id="CHEBI:57540"/>
    </ligand>
</feature>
<feature type="binding site" evidence="1">
    <location>
        <begin position="204"/>
        <end position="209"/>
    </location>
    <ligand>
        <name>NAD(+)</name>
        <dbReference type="ChEBI" id="CHEBI:57540"/>
    </ligand>
</feature>
<organism>
    <name type="scientific">Shewanella baltica (strain OS195)</name>
    <dbReference type="NCBI Taxonomy" id="399599"/>
    <lineage>
        <taxon>Bacteria</taxon>
        <taxon>Pseudomonadati</taxon>
        <taxon>Pseudomonadota</taxon>
        <taxon>Gammaproteobacteria</taxon>
        <taxon>Alteromonadales</taxon>
        <taxon>Shewanellaceae</taxon>
        <taxon>Shewanella</taxon>
    </lineage>
</organism>
<gene>
    <name evidence="1" type="primary">nadK</name>
    <name type="ordered locus">Sbal195_1378</name>
</gene>